<organism evidence="4">
    <name type="scientific">Ictalurus punctatus</name>
    <name type="common">Channel catfish</name>
    <name type="synonym">Silurus punctatus</name>
    <dbReference type="NCBI Taxonomy" id="7998"/>
    <lineage>
        <taxon>Eukaryota</taxon>
        <taxon>Metazoa</taxon>
        <taxon>Chordata</taxon>
        <taxon>Craniata</taxon>
        <taxon>Vertebrata</taxon>
        <taxon>Euteleostomi</taxon>
        <taxon>Actinopterygii</taxon>
        <taxon>Neopterygii</taxon>
        <taxon>Teleostei</taxon>
        <taxon>Ostariophysi</taxon>
        <taxon>Siluriformes</taxon>
        <taxon>Ictaluridae</taxon>
        <taxon>Ictalurus</taxon>
    </lineage>
</organism>
<comment type="function">
    <text evidence="3">Core component of nucleosome. Nucleosomes wrap and compact DNA into chromatin, limiting DNA accessibility to the cellular machineries which require DNA as a template. Histones thereby play a central role in transcription regulation, DNA repair, DNA replication and chromosomal stability. DNA accessibility is regulated via a complex set of post-translational modifications of histones, also called histone code, and nucleosome remodeling.</text>
</comment>
<comment type="function">
    <text evidence="3">Has antimicrobial activity. Possesses strong activity against saprolegnia, the most common fungal infection in fish.</text>
</comment>
<comment type="subunit">
    <text>The nucleosome is a histone octamer containing two molecules each of H2A, H2B, H3 and H4 assembled in one H3-H4 heterotetramer and two H2A-H2B heterodimers. The octamer wraps approximately 147 bp of DNA.</text>
</comment>
<comment type="subcellular location">
    <subcellularLocation>
        <location>Nucleus</location>
    </subcellularLocation>
    <subcellularLocation>
        <location>Chromosome</location>
    </subcellularLocation>
</comment>
<comment type="PTM">
    <text evidence="1">Phosphorylated during apoptosis; which facilitates apoptotic chromatin condensation.</text>
</comment>
<comment type="mass spectrometry" mass="13506.0" method="MALDI" evidence="3">
    <text>The measured range is 2-18.</text>
</comment>
<comment type="similarity">
    <text evidence="4">Belongs to the histone H2B family.</text>
</comment>
<name>H2B3_ICTPU</name>
<evidence type="ECO:0000250" key="1">
    <source>
        <dbReference type="UniProtKB" id="P06900"/>
    </source>
</evidence>
<evidence type="ECO:0000250" key="2">
    <source>
        <dbReference type="UniProtKB" id="P0C1H4"/>
    </source>
</evidence>
<evidence type="ECO:0000269" key="3">
    <source>
    </source>
</evidence>
<evidence type="ECO:0000305" key="4"/>
<reference evidence="4" key="1">
    <citation type="journal article" date="1998" name="Cell. Mol. Life Sci.">
        <title>Antimicrobial activity in the skin of the channel catfish Ictalurus punctatus: characterization of broad-spectrum histone-like antimicrobial proteins.</title>
        <authorList>
            <person name="Robinette D."/>
            <person name="Wada S."/>
            <person name="Arroll T."/>
            <person name="Levy M.G."/>
            <person name="Miller W.L."/>
            <person name="Noga E.J."/>
        </authorList>
    </citation>
    <scope>PROTEIN SEQUENCE OF 2-18</scope>
    <scope>FUNCTION</scope>
    <scope>MASS SPECTROMETRY</scope>
    <source>
        <tissue>Skin</tissue>
    </source>
</reference>
<dbReference type="Proteomes" id="UP000221080">
    <property type="component" value="Unplaced"/>
</dbReference>
<dbReference type="GO" id="GO:0000786">
    <property type="term" value="C:nucleosome"/>
    <property type="evidence" value="ECO:0007669"/>
    <property type="project" value="UniProtKB-KW"/>
</dbReference>
<dbReference type="GO" id="GO:0005634">
    <property type="term" value="C:nucleus"/>
    <property type="evidence" value="ECO:0007669"/>
    <property type="project" value="UniProtKB-SubCell"/>
</dbReference>
<dbReference type="GO" id="GO:0003677">
    <property type="term" value="F:DNA binding"/>
    <property type="evidence" value="ECO:0007669"/>
    <property type="project" value="UniProtKB-KW"/>
</dbReference>
<dbReference type="GO" id="GO:0042742">
    <property type="term" value="P:defense response to bacterium"/>
    <property type="evidence" value="ECO:0007669"/>
    <property type="project" value="UniProtKB-KW"/>
</dbReference>
<dbReference type="GO" id="GO:0050832">
    <property type="term" value="P:defense response to fungus"/>
    <property type="evidence" value="ECO:0007669"/>
    <property type="project" value="UniProtKB-KW"/>
</dbReference>
<dbReference type="GO" id="GO:0031640">
    <property type="term" value="P:killing of cells of another organism"/>
    <property type="evidence" value="ECO:0007669"/>
    <property type="project" value="UniProtKB-KW"/>
</dbReference>
<protein>
    <recommendedName>
        <fullName>Histone H2B 3</fullName>
    </recommendedName>
    <alternativeName>
        <fullName>Antibacterial histone-like protein 3</fullName>
        <shortName>HLP-3</shortName>
    </alternativeName>
</protein>
<proteinExistence type="evidence at protein level"/>
<sequence length="18" mass="1926">MPDPAKTAPKKKSKKAVT</sequence>
<keyword id="KW-0007">Acetylation</keyword>
<keyword id="KW-0044">Antibiotic</keyword>
<keyword id="KW-0929">Antimicrobial</keyword>
<keyword id="KW-0158">Chromosome</keyword>
<keyword id="KW-0903">Direct protein sequencing</keyword>
<keyword id="KW-0238">DNA-binding</keyword>
<keyword id="KW-0295">Fungicide</keyword>
<keyword id="KW-0544">Nucleosome core</keyword>
<keyword id="KW-0539">Nucleus</keyword>
<keyword id="KW-0597">Phosphoprotein</keyword>
<feature type="initiator methionine" description="Removed" evidence="3">
    <location>
        <position position="1"/>
    </location>
</feature>
<feature type="chain" id="PRO_0000071850" description="Histone H2B 3">
    <location>
        <begin position="2"/>
        <end position="18" status="greater than"/>
    </location>
</feature>
<feature type="modified residue" description="N6-acetyllysine" evidence="2">
    <location>
        <position position="6"/>
    </location>
</feature>
<feature type="modified residue" description="N6-acetyllysine" evidence="2">
    <location>
        <position position="11"/>
    </location>
</feature>
<feature type="modified residue" description="Phosphoserine" evidence="1">
    <location>
        <position position="13"/>
    </location>
</feature>
<feature type="modified residue" description="N6-acetyllysine" evidence="2">
    <location>
        <position position="14"/>
    </location>
</feature>
<feature type="non-terminal residue">
    <location>
        <position position="18"/>
    </location>
</feature>
<accession>P81904</accession>